<accession>P75249</accession>
<proteinExistence type="predicted"/>
<protein>
    <recommendedName>
        <fullName>Uncharacterized protein MG353 homolog</fullName>
    </recommendedName>
</protein>
<sequence length="109" mass="12410">MEKTTTSSKPLSRSEINKIIAVATGVKEAKIKEIFKYLNTLLLNELVSRSVCILPENLGKLRITIRNARIQKDMKTGEMKHIPPKPLVRYSPSKTIKETAAKVRWKYAD</sequence>
<reference key="1">
    <citation type="journal article" date="1996" name="Nucleic Acids Res.">
        <title>Complete sequence analysis of the genome of the bacterium Mycoplasma pneumoniae.</title>
        <authorList>
            <person name="Himmelreich R."/>
            <person name="Hilbert H."/>
            <person name="Plagens H."/>
            <person name="Pirkl E."/>
            <person name="Li B.-C."/>
            <person name="Herrmann R."/>
        </authorList>
    </citation>
    <scope>NUCLEOTIDE SEQUENCE [LARGE SCALE GENOMIC DNA]</scope>
    <source>
        <strain>ATCC 29342 / M129 / Subtype 1</strain>
    </source>
</reference>
<gene>
    <name type="ordered locus">MPN_529</name>
    <name type="ORF">G12_orf109</name>
    <name type="ORF">MP313</name>
</gene>
<name>Y529_MYCPN</name>
<feature type="chain" id="PRO_0000210560" description="Uncharacterized protein MG353 homolog">
    <location>
        <begin position="1"/>
        <end position="109"/>
    </location>
</feature>
<dbReference type="EMBL" id="U00089">
    <property type="protein sequence ID" value="AAB95961.1"/>
    <property type="molecule type" value="Genomic_DNA"/>
</dbReference>
<dbReference type="PIR" id="S73639">
    <property type="entry name" value="S73639"/>
</dbReference>
<dbReference type="RefSeq" id="NP_110218.1">
    <property type="nucleotide sequence ID" value="NC_000912.1"/>
</dbReference>
<dbReference type="RefSeq" id="WP_010874886.1">
    <property type="nucleotide sequence ID" value="NZ_OU342337.1"/>
</dbReference>
<dbReference type="SMR" id="P75249"/>
<dbReference type="STRING" id="272634.MPN_529"/>
<dbReference type="EnsemblBacteria" id="AAB95961">
    <property type="protein sequence ID" value="AAB95961"/>
    <property type="gene ID" value="MPN_529"/>
</dbReference>
<dbReference type="KEGG" id="mpn:MPN_529"/>
<dbReference type="PATRIC" id="fig|272634.6.peg.590"/>
<dbReference type="HOGENOM" id="CLU_2180963_0_0_14"/>
<dbReference type="OrthoDB" id="9891332at2"/>
<dbReference type="BioCyc" id="MPNE272634:G1GJ3-873-MONOMER"/>
<dbReference type="Proteomes" id="UP000000808">
    <property type="component" value="Chromosome"/>
</dbReference>
<dbReference type="GO" id="GO:0003677">
    <property type="term" value="F:DNA binding"/>
    <property type="evidence" value="ECO:0007669"/>
    <property type="project" value="InterPro"/>
</dbReference>
<dbReference type="GO" id="GO:0030527">
    <property type="term" value="F:structural constituent of chromatin"/>
    <property type="evidence" value="ECO:0007669"/>
    <property type="project" value="InterPro"/>
</dbReference>
<dbReference type="Gene3D" id="4.10.520.10">
    <property type="entry name" value="IHF-like DNA-binding proteins"/>
    <property type="match status" value="1"/>
</dbReference>
<dbReference type="InterPro" id="IPR000119">
    <property type="entry name" value="Hist_DNA-bd"/>
</dbReference>
<dbReference type="InterPro" id="IPR010992">
    <property type="entry name" value="IHF-like_DNA-bd_dom_sf"/>
</dbReference>
<dbReference type="Pfam" id="PF00216">
    <property type="entry name" value="Bac_DNA_binding"/>
    <property type="match status" value="1"/>
</dbReference>
<dbReference type="SMART" id="SM00411">
    <property type="entry name" value="BHL"/>
    <property type="match status" value="1"/>
</dbReference>
<dbReference type="SUPFAM" id="SSF47729">
    <property type="entry name" value="IHF-like DNA-binding proteins"/>
    <property type="match status" value="1"/>
</dbReference>
<organism>
    <name type="scientific">Mycoplasma pneumoniae (strain ATCC 29342 / M129 / Subtype 1)</name>
    <name type="common">Mycoplasmoides pneumoniae</name>
    <dbReference type="NCBI Taxonomy" id="272634"/>
    <lineage>
        <taxon>Bacteria</taxon>
        <taxon>Bacillati</taxon>
        <taxon>Mycoplasmatota</taxon>
        <taxon>Mycoplasmoidales</taxon>
        <taxon>Mycoplasmoidaceae</taxon>
        <taxon>Mycoplasmoides</taxon>
    </lineage>
</organism>
<keyword id="KW-1185">Reference proteome</keyword>